<gene>
    <name type="primary">yfhD</name>
    <name type="ordered locus">BSU08490</name>
</gene>
<name>YFHD_BACSU</name>
<evidence type="ECO:0000256" key="1">
    <source>
        <dbReference type="SAM" id="MobiDB-lite"/>
    </source>
</evidence>
<dbReference type="EMBL" id="D85082">
    <property type="protein sequence ID" value="BAA24470.1"/>
    <property type="molecule type" value="Genomic_DNA"/>
</dbReference>
<dbReference type="EMBL" id="AL009126">
    <property type="protein sequence ID" value="CAB12678.1"/>
    <property type="molecule type" value="Genomic_DNA"/>
</dbReference>
<dbReference type="PIR" id="E69800">
    <property type="entry name" value="E69800"/>
</dbReference>
<dbReference type="RefSeq" id="NP_388730.1">
    <property type="nucleotide sequence ID" value="NC_000964.3"/>
</dbReference>
<dbReference type="RefSeq" id="WP_003233561.1">
    <property type="nucleotide sequence ID" value="NZ_OZ025638.1"/>
</dbReference>
<dbReference type="FunCoup" id="O31572">
    <property type="interactions" value="79"/>
</dbReference>
<dbReference type="STRING" id="224308.BSU08490"/>
<dbReference type="PaxDb" id="224308-BSU08490"/>
<dbReference type="EnsemblBacteria" id="CAB12678">
    <property type="protein sequence ID" value="CAB12678"/>
    <property type="gene ID" value="BSU_08490"/>
</dbReference>
<dbReference type="GeneID" id="939709"/>
<dbReference type="KEGG" id="bsu:BSU08490"/>
<dbReference type="PATRIC" id="fig|224308.179.peg.916"/>
<dbReference type="eggNOG" id="ENOG50306WX">
    <property type="taxonomic scope" value="Bacteria"/>
</dbReference>
<dbReference type="InParanoid" id="O31572"/>
<dbReference type="OrthoDB" id="2973490at2"/>
<dbReference type="BioCyc" id="BSUB:BSU08490-MONOMER"/>
<dbReference type="Proteomes" id="UP000001570">
    <property type="component" value="Chromosome"/>
</dbReference>
<dbReference type="InterPro" id="IPR025435">
    <property type="entry name" value="YfhD-like"/>
</dbReference>
<dbReference type="Pfam" id="PF14151">
    <property type="entry name" value="YfhD"/>
    <property type="match status" value="1"/>
</dbReference>
<reference key="1">
    <citation type="journal article" date="1996" name="DNA Res.">
        <title>Cloning and sequencing of a 27.8-kb nucleotide sequence of the 79 degrees-81 degrees region of the Bacillus subtilis genome containing the sspE locus.</title>
        <authorList>
            <person name="Yamamoto H."/>
            <person name="Uchiyama S."/>
            <person name="Sekiguchi J."/>
        </authorList>
    </citation>
    <scope>NUCLEOTIDE SEQUENCE [GENOMIC DNA]</scope>
</reference>
<reference key="2">
    <citation type="journal article" date="1997" name="Nature">
        <title>The complete genome sequence of the Gram-positive bacterium Bacillus subtilis.</title>
        <authorList>
            <person name="Kunst F."/>
            <person name="Ogasawara N."/>
            <person name="Moszer I."/>
            <person name="Albertini A.M."/>
            <person name="Alloni G."/>
            <person name="Azevedo V."/>
            <person name="Bertero M.G."/>
            <person name="Bessieres P."/>
            <person name="Bolotin A."/>
            <person name="Borchert S."/>
            <person name="Borriss R."/>
            <person name="Boursier L."/>
            <person name="Brans A."/>
            <person name="Braun M."/>
            <person name="Brignell S.C."/>
            <person name="Bron S."/>
            <person name="Brouillet S."/>
            <person name="Bruschi C.V."/>
            <person name="Caldwell B."/>
            <person name="Capuano V."/>
            <person name="Carter N.M."/>
            <person name="Choi S.-K."/>
            <person name="Codani J.-J."/>
            <person name="Connerton I.F."/>
            <person name="Cummings N.J."/>
            <person name="Daniel R.A."/>
            <person name="Denizot F."/>
            <person name="Devine K.M."/>
            <person name="Duesterhoeft A."/>
            <person name="Ehrlich S.D."/>
            <person name="Emmerson P.T."/>
            <person name="Entian K.-D."/>
            <person name="Errington J."/>
            <person name="Fabret C."/>
            <person name="Ferrari E."/>
            <person name="Foulger D."/>
            <person name="Fritz C."/>
            <person name="Fujita M."/>
            <person name="Fujita Y."/>
            <person name="Fuma S."/>
            <person name="Galizzi A."/>
            <person name="Galleron N."/>
            <person name="Ghim S.-Y."/>
            <person name="Glaser P."/>
            <person name="Goffeau A."/>
            <person name="Golightly E.J."/>
            <person name="Grandi G."/>
            <person name="Guiseppi G."/>
            <person name="Guy B.J."/>
            <person name="Haga K."/>
            <person name="Haiech J."/>
            <person name="Harwood C.R."/>
            <person name="Henaut A."/>
            <person name="Hilbert H."/>
            <person name="Holsappel S."/>
            <person name="Hosono S."/>
            <person name="Hullo M.-F."/>
            <person name="Itaya M."/>
            <person name="Jones L.-M."/>
            <person name="Joris B."/>
            <person name="Karamata D."/>
            <person name="Kasahara Y."/>
            <person name="Klaerr-Blanchard M."/>
            <person name="Klein C."/>
            <person name="Kobayashi Y."/>
            <person name="Koetter P."/>
            <person name="Koningstein G."/>
            <person name="Krogh S."/>
            <person name="Kumano M."/>
            <person name="Kurita K."/>
            <person name="Lapidus A."/>
            <person name="Lardinois S."/>
            <person name="Lauber J."/>
            <person name="Lazarevic V."/>
            <person name="Lee S.-M."/>
            <person name="Levine A."/>
            <person name="Liu H."/>
            <person name="Masuda S."/>
            <person name="Mauel C."/>
            <person name="Medigue C."/>
            <person name="Medina N."/>
            <person name="Mellado R.P."/>
            <person name="Mizuno M."/>
            <person name="Moestl D."/>
            <person name="Nakai S."/>
            <person name="Noback M."/>
            <person name="Noone D."/>
            <person name="O'Reilly M."/>
            <person name="Ogawa K."/>
            <person name="Ogiwara A."/>
            <person name="Oudega B."/>
            <person name="Park S.-H."/>
            <person name="Parro V."/>
            <person name="Pohl T.M."/>
            <person name="Portetelle D."/>
            <person name="Porwollik S."/>
            <person name="Prescott A.M."/>
            <person name="Presecan E."/>
            <person name="Pujic P."/>
            <person name="Purnelle B."/>
            <person name="Rapoport G."/>
            <person name="Rey M."/>
            <person name="Reynolds S."/>
            <person name="Rieger M."/>
            <person name="Rivolta C."/>
            <person name="Rocha E."/>
            <person name="Roche B."/>
            <person name="Rose M."/>
            <person name="Sadaie Y."/>
            <person name="Sato T."/>
            <person name="Scanlan E."/>
            <person name="Schleich S."/>
            <person name="Schroeter R."/>
            <person name="Scoffone F."/>
            <person name="Sekiguchi J."/>
            <person name="Sekowska A."/>
            <person name="Seror S.J."/>
            <person name="Serror P."/>
            <person name="Shin B.-S."/>
            <person name="Soldo B."/>
            <person name="Sorokin A."/>
            <person name="Tacconi E."/>
            <person name="Takagi T."/>
            <person name="Takahashi H."/>
            <person name="Takemaru K."/>
            <person name="Takeuchi M."/>
            <person name="Tamakoshi A."/>
            <person name="Tanaka T."/>
            <person name="Terpstra P."/>
            <person name="Tognoni A."/>
            <person name="Tosato V."/>
            <person name="Uchiyama S."/>
            <person name="Vandenbol M."/>
            <person name="Vannier F."/>
            <person name="Vassarotti A."/>
            <person name="Viari A."/>
            <person name="Wambutt R."/>
            <person name="Wedler E."/>
            <person name="Wedler H."/>
            <person name="Weitzenegger T."/>
            <person name="Winters P."/>
            <person name="Wipat A."/>
            <person name="Yamamoto H."/>
            <person name="Yamane K."/>
            <person name="Yasumoto K."/>
            <person name="Yata K."/>
            <person name="Yoshida K."/>
            <person name="Yoshikawa H.-F."/>
            <person name="Zumstein E."/>
            <person name="Yoshikawa H."/>
            <person name="Danchin A."/>
        </authorList>
    </citation>
    <scope>NUCLEOTIDE SEQUENCE [LARGE SCALE GENOMIC DNA]</scope>
    <source>
        <strain>168</strain>
    </source>
</reference>
<proteinExistence type="predicted"/>
<keyword id="KW-1185">Reference proteome</keyword>
<accession>O31572</accession>
<organism>
    <name type="scientific">Bacillus subtilis (strain 168)</name>
    <dbReference type="NCBI Taxonomy" id="224308"/>
    <lineage>
        <taxon>Bacteria</taxon>
        <taxon>Bacillati</taxon>
        <taxon>Bacillota</taxon>
        <taxon>Bacilli</taxon>
        <taxon>Bacillales</taxon>
        <taxon>Bacillaceae</taxon>
        <taxon>Bacillus</taxon>
    </lineage>
</organism>
<sequence>MGRNHIHKNRDKNKQKLPQVPDALKRETDGVYEEYSTELADADDREAQERAKAADNRAKKKSR</sequence>
<feature type="chain" id="PRO_0000049521" description="Uncharacterized protein YfhD">
    <location>
        <begin position="1"/>
        <end position="63"/>
    </location>
</feature>
<feature type="region of interest" description="Disordered" evidence="1">
    <location>
        <begin position="1"/>
        <end position="63"/>
    </location>
</feature>
<feature type="compositionally biased region" description="Basic residues" evidence="1">
    <location>
        <begin position="1"/>
        <end position="15"/>
    </location>
</feature>
<feature type="compositionally biased region" description="Acidic residues" evidence="1">
    <location>
        <begin position="30"/>
        <end position="44"/>
    </location>
</feature>
<feature type="compositionally biased region" description="Basic and acidic residues" evidence="1">
    <location>
        <begin position="45"/>
        <end position="57"/>
    </location>
</feature>
<protein>
    <recommendedName>
        <fullName>Uncharacterized protein YfhD</fullName>
    </recommendedName>
</protein>